<sequence length="465" mass="49491">MNEAFDCVVIGAGPGGYVAAITAAQAGLKTALIEKREAGGTCLNRGCIPSKALLAGAEVVTQIRHADQFGIHVEGFSINYPAMVQRKDSVVRSIRDGLNGLIRSNKITVFSGRGSLISSTEVKILGENPSVIKAHSIILATGSEPRAFPGIPFSAESPRILCSTGVLNLKEIPQKMAIIGGGVIGCEFASLFHTLGSEVSVIEASSQILALNNPDISKTMFDKFTRQGLRFVLEASVSNIEDIGDRVRLTINGNVEEYDYVLVSIGRRLNTENIGLDKAGVICDERGVIPTDATMRTNVPNIYAIGDITGKWQLAHVASHQGIIAARNIAGHKEEIDYSAVPSVIFTFPEVASVGLSPTAAQQQKIPVKVTKFPFRAIGKAVAMGEADGFAAIISHETTQQILGAYVIGPHASSLISEITLAVRNELTLPCIYETIHAHPTLAEVWAESALLAVDTPLHMPPAKK</sequence>
<protein>
    <recommendedName>
        <fullName>Dihydrolipoyl dehydrogenase</fullName>
        <ecNumber>1.8.1.4</ecNumber>
    </recommendedName>
    <alternativeName>
        <fullName>Dihydrolipoamide dehydrogenase</fullName>
    </alternativeName>
    <alternativeName>
        <fullName>E3 component of 2-oxoglutarate dehydrogenase complex</fullName>
    </alternativeName>
</protein>
<gene>
    <name type="primary">lpdA</name>
    <name type="ordered locus">CT_557</name>
</gene>
<keyword id="KW-0963">Cytoplasm</keyword>
<keyword id="KW-1015">Disulfide bond</keyword>
<keyword id="KW-0274">FAD</keyword>
<keyword id="KW-0285">Flavoprotein</keyword>
<keyword id="KW-0520">NAD</keyword>
<keyword id="KW-0560">Oxidoreductase</keyword>
<keyword id="KW-0676">Redox-active center</keyword>
<keyword id="KW-1185">Reference proteome</keyword>
<organism>
    <name type="scientific">Chlamydia trachomatis serovar D (strain ATCC VR-885 / DSM 19411 / UW-3/Cx)</name>
    <dbReference type="NCBI Taxonomy" id="272561"/>
    <lineage>
        <taxon>Bacteria</taxon>
        <taxon>Pseudomonadati</taxon>
        <taxon>Chlamydiota</taxon>
        <taxon>Chlamydiia</taxon>
        <taxon>Chlamydiales</taxon>
        <taxon>Chlamydiaceae</taxon>
        <taxon>Chlamydia/Chlamydophila group</taxon>
        <taxon>Chlamydia</taxon>
    </lineage>
</organism>
<dbReference type="EC" id="1.8.1.4"/>
<dbReference type="EMBL" id="AE001273">
    <property type="protein sequence ID" value="AAC68159.1"/>
    <property type="molecule type" value="Genomic_DNA"/>
</dbReference>
<dbReference type="PIR" id="E71500">
    <property type="entry name" value="E71500"/>
</dbReference>
<dbReference type="RefSeq" id="NP_220072.1">
    <property type="nucleotide sequence ID" value="NC_000117.1"/>
</dbReference>
<dbReference type="RefSeq" id="WP_009871921.1">
    <property type="nucleotide sequence ID" value="NC_000117.1"/>
</dbReference>
<dbReference type="SMR" id="O84561"/>
<dbReference type="FunCoup" id="O84561">
    <property type="interactions" value="136"/>
</dbReference>
<dbReference type="STRING" id="272561.CT_557"/>
<dbReference type="EnsemblBacteria" id="AAC68159">
    <property type="protein sequence ID" value="AAC68159"/>
    <property type="gene ID" value="CT_557"/>
</dbReference>
<dbReference type="GeneID" id="884341"/>
<dbReference type="KEGG" id="ctr:CT_557"/>
<dbReference type="PATRIC" id="fig|272561.5.peg.608"/>
<dbReference type="HOGENOM" id="CLU_016755_0_3_0"/>
<dbReference type="InParanoid" id="O84561"/>
<dbReference type="OrthoDB" id="9807946at2"/>
<dbReference type="BioCyc" id="MetaCyc:CT_557-MONOMER"/>
<dbReference type="Proteomes" id="UP000000431">
    <property type="component" value="Chromosome"/>
</dbReference>
<dbReference type="GO" id="GO:0005737">
    <property type="term" value="C:cytoplasm"/>
    <property type="evidence" value="ECO:0007669"/>
    <property type="project" value="UniProtKB-SubCell"/>
</dbReference>
<dbReference type="GO" id="GO:0004148">
    <property type="term" value="F:dihydrolipoyl dehydrogenase (NADH) activity"/>
    <property type="evidence" value="ECO:0000318"/>
    <property type="project" value="GO_Central"/>
</dbReference>
<dbReference type="GO" id="GO:0050660">
    <property type="term" value="F:flavin adenine dinucleotide binding"/>
    <property type="evidence" value="ECO:0000318"/>
    <property type="project" value="GO_Central"/>
</dbReference>
<dbReference type="GO" id="GO:0006103">
    <property type="term" value="P:2-oxoglutarate metabolic process"/>
    <property type="evidence" value="ECO:0000318"/>
    <property type="project" value="GO_Central"/>
</dbReference>
<dbReference type="GO" id="GO:0006090">
    <property type="term" value="P:pyruvate metabolic process"/>
    <property type="evidence" value="ECO:0000318"/>
    <property type="project" value="GO_Central"/>
</dbReference>
<dbReference type="FunFam" id="3.30.390.30:FF:000001">
    <property type="entry name" value="Dihydrolipoyl dehydrogenase"/>
    <property type="match status" value="1"/>
</dbReference>
<dbReference type="Gene3D" id="3.30.390.30">
    <property type="match status" value="1"/>
</dbReference>
<dbReference type="Gene3D" id="3.50.50.60">
    <property type="entry name" value="FAD/NAD(P)-binding domain"/>
    <property type="match status" value="2"/>
</dbReference>
<dbReference type="InterPro" id="IPR050151">
    <property type="entry name" value="Class-I_Pyr_Nuc-Dis_Oxidored"/>
</dbReference>
<dbReference type="InterPro" id="IPR036188">
    <property type="entry name" value="FAD/NAD-bd_sf"/>
</dbReference>
<dbReference type="InterPro" id="IPR023753">
    <property type="entry name" value="FAD/NAD-binding_dom"/>
</dbReference>
<dbReference type="InterPro" id="IPR016156">
    <property type="entry name" value="FAD/NAD-linked_Rdtase_dimer_sf"/>
</dbReference>
<dbReference type="InterPro" id="IPR006258">
    <property type="entry name" value="Lipoamide_DH"/>
</dbReference>
<dbReference type="InterPro" id="IPR001100">
    <property type="entry name" value="Pyr_nuc-diS_OxRdtase"/>
</dbReference>
<dbReference type="InterPro" id="IPR004099">
    <property type="entry name" value="Pyr_nucl-diS_OxRdtase_dimer"/>
</dbReference>
<dbReference type="InterPro" id="IPR012999">
    <property type="entry name" value="Pyr_OxRdtase_I_AS"/>
</dbReference>
<dbReference type="NCBIfam" id="TIGR01350">
    <property type="entry name" value="lipoamide_DH"/>
    <property type="match status" value="1"/>
</dbReference>
<dbReference type="PANTHER" id="PTHR22912:SF217">
    <property type="entry name" value="DIHYDROLIPOYL DEHYDROGENASE"/>
    <property type="match status" value="1"/>
</dbReference>
<dbReference type="PANTHER" id="PTHR22912">
    <property type="entry name" value="DISULFIDE OXIDOREDUCTASE"/>
    <property type="match status" value="1"/>
</dbReference>
<dbReference type="Pfam" id="PF07992">
    <property type="entry name" value="Pyr_redox_2"/>
    <property type="match status" value="1"/>
</dbReference>
<dbReference type="Pfam" id="PF02852">
    <property type="entry name" value="Pyr_redox_dim"/>
    <property type="match status" value="1"/>
</dbReference>
<dbReference type="PIRSF" id="PIRSF000350">
    <property type="entry name" value="Mercury_reductase_MerA"/>
    <property type="match status" value="1"/>
</dbReference>
<dbReference type="PRINTS" id="PR00368">
    <property type="entry name" value="FADPNR"/>
</dbReference>
<dbReference type="PRINTS" id="PR00411">
    <property type="entry name" value="PNDRDTASEI"/>
</dbReference>
<dbReference type="SUPFAM" id="SSF51905">
    <property type="entry name" value="FAD/NAD(P)-binding domain"/>
    <property type="match status" value="1"/>
</dbReference>
<dbReference type="SUPFAM" id="SSF55424">
    <property type="entry name" value="FAD/NAD-linked reductases, dimerisation (C-terminal) domain"/>
    <property type="match status" value="1"/>
</dbReference>
<dbReference type="PROSITE" id="PS00076">
    <property type="entry name" value="PYRIDINE_REDOX_1"/>
    <property type="match status" value="1"/>
</dbReference>
<comment type="function">
    <text evidence="1">The branched-chain alpha-keto dehydrogenase complex catalyzes the overall conversion of alpha-keto acids to acyl-CoA and CO(2). It contains multiple copies of 3 enzymatic components: branched-chain alpha-keto acid decarboxylase (E1), lipoamide acyltransferase (E2) and lipoamide dehydrogenase (E3) (By similarity).</text>
</comment>
<comment type="catalytic activity">
    <reaction>
        <text>N(6)-[(R)-dihydrolipoyl]-L-lysyl-[protein] + NAD(+) = N(6)-[(R)-lipoyl]-L-lysyl-[protein] + NADH + H(+)</text>
        <dbReference type="Rhea" id="RHEA:15045"/>
        <dbReference type="Rhea" id="RHEA-COMP:10474"/>
        <dbReference type="Rhea" id="RHEA-COMP:10475"/>
        <dbReference type="ChEBI" id="CHEBI:15378"/>
        <dbReference type="ChEBI" id="CHEBI:57540"/>
        <dbReference type="ChEBI" id="CHEBI:57945"/>
        <dbReference type="ChEBI" id="CHEBI:83099"/>
        <dbReference type="ChEBI" id="CHEBI:83100"/>
        <dbReference type="EC" id="1.8.1.4"/>
    </reaction>
</comment>
<comment type="cofactor">
    <cofactor evidence="1">
        <name>FAD</name>
        <dbReference type="ChEBI" id="CHEBI:57692"/>
    </cofactor>
    <text evidence="1">Binds 1 FAD per subunit.</text>
</comment>
<comment type="subcellular location">
    <subcellularLocation>
        <location evidence="1">Cytoplasm</location>
    </subcellularLocation>
</comment>
<comment type="miscellaneous">
    <text>The active site is a redox-active disulfide bond.</text>
</comment>
<comment type="similarity">
    <text evidence="2">Belongs to the class-I pyridine nucleotide-disulfide oxidoreductase family.</text>
</comment>
<accession>O84561</accession>
<feature type="chain" id="PRO_0000068026" description="Dihydrolipoyl dehydrogenase">
    <location>
        <begin position="1"/>
        <end position="465"/>
    </location>
</feature>
<feature type="active site" description="Proton acceptor" evidence="1">
    <location>
        <position position="439"/>
    </location>
</feature>
<feature type="binding site" evidence="1">
    <location>
        <begin position="34"/>
        <end position="42"/>
    </location>
    <ligand>
        <name>FAD</name>
        <dbReference type="ChEBI" id="CHEBI:57692"/>
    </ligand>
</feature>
<feature type="binding site" evidence="1">
    <location>
        <position position="51"/>
    </location>
    <ligand>
        <name>FAD</name>
        <dbReference type="ChEBI" id="CHEBI:57692"/>
    </ligand>
</feature>
<feature type="binding site" evidence="1">
    <location>
        <position position="114"/>
    </location>
    <ligand>
        <name>FAD</name>
        <dbReference type="ChEBI" id="CHEBI:57692"/>
    </ligand>
</feature>
<feature type="binding site" evidence="1">
    <location>
        <begin position="180"/>
        <end position="184"/>
    </location>
    <ligand>
        <name>NAD(+)</name>
        <dbReference type="ChEBI" id="CHEBI:57540"/>
    </ligand>
</feature>
<feature type="binding site" evidence="1">
    <location>
        <position position="203"/>
    </location>
    <ligand>
        <name>NAD(+)</name>
        <dbReference type="ChEBI" id="CHEBI:57540"/>
    </ligand>
</feature>
<feature type="binding site" evidence="1">
    <location>
        <position position="237"/>
    </location>
    <ligand>
        <name>NAD(+)</name>
        <dbReference type="ChEBI" id="CHEBI:57540"/>
    </ligand>
</feature>
<feature type="binding site" evidence="1">
    <location>
        <begin position="264"/>
        <end position="267"/>
    </location>
    <ligand>
        <name>NAD(+)</name>
        <dbReference type="ChEBI" id="CHEBI:57540"/>
    </ligand>
</feature>
<feature type="binding site" evidence="1">
    <location>
        <position position="307"/>
    </location>
    <ligand>
        <name>FAD</name>
        <dbReference type="ChEBI" id="CHEBI:57692"/>
    </ligand>
</feature>
<feature type="binding site" evidence="1">
    <location>
        <position position="315"/>
    </location>
    <ligand>
        <name>FAD</name>
        <dbReference type="ChEBI" id="CHEBI:57692"/>
    </ligand>
</feature>
<feature type="disulfide bond" description="Redox-active" evidence="1">
    <location>
        <begin position="42"/>
        <end position="47"/>
    </location>
</feature>
<name>DLDH_CHLTR</name>
<proteinExistence type="inferred from homology"/>
<reference key="1">
    <citation type="journal article" date="1998" name="Science">
        <title>Genome sequence of an obligate intracellular pathogen of humans: Chlamydia trachomatis.</title>
        <authorList>
            <person name="Stephens R.S."/>
            <person name="Kalman S."/>
            <person name="Lammel C.J."/>
            <person name="Fan J."/>
            <person name="Marathe R."/>
            <person name="Aravind L."/>
            <person name="Mitchell W.P."/>
            <person name="Olinger L."/>
            <person name="Tatusov R.L."/>
            <person name="Zhao Q."/>
            <person name="Koonin E.V."/>
            <person name="Davis R.W."/>
        </authorList>
    </citation>
    <scope>NUCLEOTIDE SEQUENCE [LARGE SCALE GENOMIC DNA]</scope>
    <source>
        <strain>ATCC VR-885 / DSM 19411 / UW-3/Cx</strain>
    </source>
</reference>
<evidence type="ECO:0000250" key="1"/>
<evidence type="ECO:0000305" key="2"/>